<accession>Q8EPT8</accession>
<reference key="1">
    <citation type="journal article" date="2002" name="Nucleic Acids Res.">
        <title>Genome sequence of Oceanobacillus iheyensis isolated from the Iheya Ridge and its unexpected adaptive capabilities to extreme environments.</title>
        <authorList>
            <person name="Takami H."/>
            <person name="Takaki Y."/>
            <person name="Uchiyama I."/>
        </authorList>
    </citation>
    <scope>NUCLEOTIDE SEQUENCE [LARGE SCALE GENOMIC DNA]</scope>
    <source>
        <strain>DSM 14371 / CIP 107618 / JCM 11309 / KCTC 3954 / HTE831</strain>
    </source>
</reference>
<sequence>MTIGIIGAMDEEIALLKQQMKDMEELEVAGCYFYTGHLHDKSVVLLLSGIGKVNAAMATTILHERFSPSMIINTGSAGGFASDLQVGDVVISEEVLHHDVDATAFDYVYGQVPGMPATYKADQRLVELSSEVMKDIEINSRIGVIATGDSFMQRKDQTDIVKQRFPGMLALEMEAASIAQVCYRYNTPFVITRALSDIAGQESSVSFDQFLQTAGKNAAQLIINMVKKI</sequence>
<protein>
    <recommendedName>
        <fullName evidence="1">5'-methylthioadenosine/S-adenosylhomocysteine nucleosidase</fullName>
        <shortName evidence="1">MTA/SAH nucleosidase</shortName>
        <shortName evidence="1">MTAN</shortName>
        <ecNumber evidence="1">3.2.2.9</ecNumber>
    </recommendedName>
    <alternativeName>
        <fullName evidence="1">5'-deoxyadenosine nucleosidase</fullName>
        <shortName evidence="1">DOA nucleosidase</shortName>
        <shortName evidence="1">dAdo nucleosidase</shortName>
    </alternativeName>
    <alternativeName>
        <fullName evidence="1">5'-methylthioadenosine nucleosidase</fullName>
        <shortName evidence="1">MTA nucleosidase</shortName>
    </alternativeName>
    <alternativeName>
        <fullName evidence="1">S-adenosylhomocysteine nucleosidase</fullName>
        <shortName evidence="1">AdoHcy nucleosidase</shortName>
        <shortName evidence="1">SAH nucleosidase</shortName>
        <shortName evidence="1">SRH nucleosidase</shortName>
    </alternativeName>
</protein>
<name>MTNN_OCEIH</name>
<keyword id="KW-0028">Amino-acid biosynthesis</keyword>
<keyword id="KW-0378">Hydrolase</keyword>
<keyword id="KW-0486">Methionine biosynthesis</keyword>
<keyword id="KW-1185">Reference proteome</keyword>
<gene>
    <name evidence="1" type="primary">mtnN</name>
    <name type="ordered locus">OB2000</name>
</gene>
<feature type="chain" id="PRO_0000359319" description="5'-methylthioadenosine/S-adenosylhomocysteine nucleosidase">
    <location>
        <begin position="1"/>
        <end position="229"/>
    </location>
</feature>
<feature type="active site" description="Proton acceptor" evidence="1">
    <location>
        <position position="12"/>
    </location>
</feature>
<feature type="active site" description="Proton donor" evidence="1">
    <location>
        <position position="197"/>
    </location>
</feature>
<feature type="binding site" evidence="1">
    <location>
        <position position="78"/>
    </location>
    <ligand>
        <name>substrate</name>
    </ligand>
</feature>
<feature type="binding site" evidence="1">
    <location>
        <position position="152"/>
    </location>
    <ligand>
        <name>substrate</name>
    </ligand>
</feature>
<feature type="binding site" evidence="1">
    <location>
        <begin position="173"/>
        <end position="174"/>
    </location>
    <ligand>
        <name>substrate</name>
    </ligand>
</feature>
<comment type="function">
    <text evidence="1">Catalyzes the irreversible cleavage of the glycosidic bond in both 5'-methylthioadenosine (MTA) and S-adenosylhomocysteine (SAH/AdoHcy) to adenine and the corresponding thioribose, 5'-methylthioribose and S-ribosylhomocysteine, respectively. Also cleaves 5'-deoxyadenosine, a toxic by-product of radical S-adenosylmethionine (SAM) enzymes, into 5-deoxyribose and adenine.</text>
</comment>
<comment type="catalytic activity">
    <reaction evidence="1">
        <text>S-adenosyl-L-homocysteine + H2O = S-(5-deoxy-D-ribos-5-yl)-L-homocysteine + adenine</text>
        <dbReference type="Rhea" id="RHEA:17805"/>
        <dbReference type="ChEBI" id="CHEBI:15377"/>
        <dbReference type="ChEBI" id="CHEBI:16708"/>
        <dbReference type="ChEBI" id="CHEBI:57856"/>
        <dbReference type="ChEBI" id="CHEBI:58195"/>
        <dbReference type="EC" id="3.2.2.9"/>
    </reaction>
</comment>
<comment type="catalytic activity">
    <reaction evidence="1">
        <text>S-methyl-5'-thioadenosine + H2O = 5-(methylsulfanyl)-D-ribose + adenine</text>
        <dbReference type="Rhea" id="RHEA:13617"/>
        <dbReference type="ChEBI" id="CHEBI:15377"/>
        <dbReference type="ChEBI" id="CHEBI:16708"/>
        <dbReference type="ChEBI" id="CHEBI:17509"/>
        <dbReference type="ChEBI" id="CHEBI:78440"/>
        <dbReference type="EC" id="3.2.2.9"/>
    </reaction>
</comment>
<comment type="catalytic activity">
    <reaction evidence="1">
        <text>5'-deoxyadenosine + H2O = 5-deoxy-D-ribose + adenine</text>
        <dbReference type="Rhea" id="RHEA:29859"/>
        <dbReference type="ChEBI" id="CHEBI:15377"/>
        <dbReference type="ChEBI" id="CHEBI:16708"/>
        <dbReference type="ChEBI" id="CHEBI:17319"/>
        <dbReference type="ChEBI" id="CHEBI:149540"/>
        <dbReference type="EC" id="3.2.2.9"/>
    </reaction>
    <physiologicalReaction direction="left-to-right" evidence="1">
        <dbReference type="Rhea" id="RHEA:29860"/>
    </physiologicalReaction>
</comment>
<comment type="pathway">
    <text evidence="1">Amino-acid biosynthesis; L-methionine biosynthesis via salvage pathway; S-methyl-5-thio-alpha-D-ribose 1-phosphate from S-methyl-5'-thioadenosine (hydrolase route): step 1/2.</text>
</comment>
<comment type="similarity">
    <text evidence="1">Belongs to the PNP/UDP phosphorylase family. MtnN subfamily.</text>
</comment>
<organism>
    <name type="scientific">Oceanobacillus iheyensis (strain DSM 14371 / CIP 107618 / JCM 11309 / KCTC 3954 / HTE831)</name>
    <dbReference type="NCBI Taxonomy" id="221109"/>
    <lineage>
        <taxon>Bacteria</taxon>
        <taxon>Bacillati</taxon>
        <taxon>Bacillota</taxon>
        <taxon>Bacilli</taxon>
        <taxon>Bacillales</taxon>
        <taxon>Bacillaceae</taxon>
        <taxon>Oceanobacillus</taxon>
    </lineage>
</organism>
<proteinExistence type="inferred from homology"/>
<dbReference type="EC" id="3.2.2.9" evidence="1"/>
<dbReference type="EMBL" id="BA000028">
    <property type="protein sequence ID" value="BAC13956.1"/>
    <property type="molecule type" value="Genomic_DNA"/>
</dbReference>
<dbReference type="RefSeq" id="WP_011066396.1">
    <property type="nucleotide sequence ID" value="NC_004193.1"/>
</dbReference>
<dbReference type="SMR" id="Q8EPT8"/>
<dbReference type="STRING" id="221109.gene:10734246"/>
<dbReference type="KEGG" id="oih:OB2000"/>
<dbReference type="eggNOG" id="COG0775">
    <property type="taxonomic scope" value="Bacteria"/>
</dbReference>
<dbReference type="HOGENOM" id="CLU_031248_2_2_9"/>
<dbReference type="OrthoDB" id="9792278at2"/>
<dbReference type="PhylomeDB" id="Q8EPT8"/>
<dbReference type="UniPathway" id="UPA00904">
    <property type="reaction ID" value="UER00871"/>
</dbReference>
<dbReference type="Proteomes" id="UP000000822">
    <property type="component" value="Chromosome"/>
</dbReference>
<dbReference type="GO" id="GO:0005829">
    <property type="term" value="C:cytosol"/>
    <property type="evidence" value="ECO:0007669"/>
    <property type="project" value="TreeGrafter"/>
</dbReference>
<dbReference type="GO" id="GO:0008782">
    <property type="term" value="F:adenosylhomocysteine nucleosidase activity"/>
    <property type="evidence" value="ECO:0007669"/>
    <property type="project" value="UniProtKB-UniRule"/>
</dbReference>
<dbReference type="GO" id="GO:0008930">
    <property type="term" value="F:methylthioadenosine nucleosidase activity"/>
    <property type="evidence" value="ECO:0007669"/>
    <property type="project" value="UniProtKB-UniRule"/>
</dbReference>
<dbReference type="GO" id="GO:0019509">
    <property type="term" value="P:L-methionine salvage from methylthioadenosine"/>
    <property type="evidence" value="ECO:0007669"/>
    <property type="project" value="UniProtKB-UniRule"/>
</dbReference>
<dbReference type="GO" id="GO:0019284">
    <property type="term" value="P:L-methionine salvage from S-adenosylmethionine"/>
    <property type="evidence" value="ECO:0007669"/>
    <property type="project" value="TreeGrafter"/>
</dbReference>
<dbReference type="GO" id="GO:0009164">
    <property type="term" value="P:nucleoside catabolic process"/>
    <property type="evidence" value="ECO:0007669"/>
    <property type="project" value="InterPro"/>
</dbReference>
<dbReference type="CDD" id="cd09008">
    <property type="entry name" value="MTAN"/>
    <property type="match status" value="1"/>
</dbReference>
<dbReference type="FunFam" id="3.40.50.1580:FF:000001">
    <property type="entry name" value="MTA/SAH nucleosidase family protein"/>
    <property type="match status" value="1"/>
</dbReference>
<dbReference type="Gene3D" id="3.40.50.1580">
    <property type="entry name" value="Nucleoside phosphorylase domain"/>
    <property type="match status" value="1"/>
</dbReference>
<dbReference type="HAMAP" id="MF_01684">
    <property type="entry name" value="Salvage_MtnN"/>
    <property type="match status" value="1"/>
</dbReference>
<dbReference type="InterPro" id="IPR010049">
    <property type="entry name" value="MTA_SAH_Nsdase"/>
</dbReference>
<dbReference type="InterPro" id="IPR000845">
    <property type="entry name" value="Nucleoside_phosphorylase_d"/>
</dbReference>
<dbReference type="InterPro" id="IPR035994">
    <property type="entry name" value="Nucleoside_phosphorylase_sf"/>
</dbReference>
<dbReference type="NCBIfam" id="TIGR01704">
    <property type="entry name" value="MTA_SAH-Nsdase"/>
    <property type="match status" value="1"/>
</dbReference>
<dbReference type="NCBIfam" id="NF004079">
    <property type="entry name" value="PRK05584.1"/>
    <property type="match status" value="1"/>
</dbReference>
<dbReference type="PANTHER" id="PTHR46832">
    <property type="entry name" value="5'-METHYLTHIOADENOSINE/S-ADENOSYLHOMOCYSTEINE NUCLEOSIDASE"/>
    <property type="match status" value="1"/>
</dbReference>
<dbReference type="PANTHER" id="PTHR46832:SF1">
    <property type="entry name" value="5'-METHYLTHIOADENOSINE_S-ADENOSYLHOMOCYSTEINE NUCLEOSIDASE"/>
    <property type="match status" value="1"/>
</dbReference>
<dbReference type="Pfam" id="PF01048">
    <property type="entry name" value="PNP_UDP_1"/>
    <property type="match status" value="1"/>
</dbReference>
<dbReference type="SUPFAM" id="SSF53167">
    <property type="entry name" value="Purine and uridine phosphorylases"/>
    <property type="match status" value="1"/>
</dbReference>
<evidence type="ECO:0000255" key="1">
    <source>
        <dbReference type="HAMAP-Rule" id="MF_01684"/>
    </source>
</evidence>